<organism>
    <name type="scientific">Nostoc sp. (strain PCC 7120 / SAG 25.82 / UTEX 2576)</name>
    <dbReference type="NCBI Taxonomy" id="103690"/>
    <lineage>
        <taxon>Bacteria</taxon>
        <taxon>Bacillati</taxon>
        <taxon>Cyanobacteriota</taxon>
        <taxon>Cyanophyceae</taxon>
        <taxon>Nostocales</taxon>
        <taxon>Nostocaceae</taxon>
        <taxon>Nostoc</taxon>
    </lineage>
</organism>
<comment type="function">
    <text evidence="1">NDH-1 shuttles electrons from an unknown electron donor, via FMN and iron-sulfur (Fe-S) centers, to quinones in the respiratory and/or the photosynthetic chain. The immediate electron acceptor for the enzyme in this species is believed to be plastoquinone. Couples the redox reaction to proton translocation, and thus conserves the redox energy in a proton gradient. Cyanobacterial NDH-1 also plays a role in inorganic carbon-concentration.</text>
</comment>
<comment type="catalytic activity">
    <reaction evidence="1">
        <text>a plastoquinone + NADH + (n+1) H(+)(in) = a plastoquinol + NAD(+) + n H(+)(out)</text>
        <dbReference type="Rhea" id="RHEA:42608"/>
        <dbReference type="Rhea" id="RHEA-COMP:9561"/>
        <dbReference type="Rhea" id="RHEA-COMP:9562"/>
        <dbReference type="ChEBI" id="CHEBI:15378"/>
        <dbReference type="ChEBI" id="CHEBI:17757"/>
        <dbReference type="ChEBI" id="CHEBI:57540"/>
        <dbReference type="ChEBI" id="CHEBI:57945"/>
        <dbReference type="ChEBI" id="CHEBI:62192"/>
    </reaction>
</comment>
<comment type="catalytic activity">
    <reaction evidence="1">
        <text>a plastoquinone + NADPH + (n+1) H(+)(in) = a plastoquinol + NADP(+) + n H(+)(out)</text>
        <dbReference type="Rhea" id="RHEA:42612"/>
        <dbReference type="Rhea" id="RHEA-COMP:9561"/>
        <dbReference type="Rhea" id="RHEA-COMP:9562"/>
        <dbReference type="ChEBI" id="CHEBI:15378"/>
        <dbReference type="ChEBI" id="CHEBI:17757"/>
        <dbReference type="ChEBI" id="CHEBI:57783"/>
        <dbReference type="ChEBI" id="CHEBI:58349"/>
        <dbReference type="ChEBI" id="CHEBI:62192"/>
    </reaction>
</comment>
<comment type="subunit">
    <text evidence="1">NDH-1 can be composed of about 15 different subunits; different subcomplexes with different compositions have been identified which probably have different functions.</text>
</comment>
<comment type="subcellular location">
    <subcellularLocation>
        <location evidence="1">Cellular thylakoid membrane</location>
        <topology evidence="1">Peripheral membrane protein</topology>
        <orientation evidence="1">Cytoplasmic side</orientation>
    </subcellularLocation>
</comment>
<comment type="similarity">
    <text evidence="1">Belongs to the complex I NdhM subunit family.</text>
</comment>
<accession>Q8YW84</accession>
<name>NDHM_NOSS1</name>
<sequence>MENATLLKSTTRHIRIFAAEIDRDGELVPSNQVLTLDIDPDNEFNWNEDALQKIYRKFDELVEASSGADLTDYNLRRIGSDLEHYLRSLLQKGEISYNLSARVTNYSLGLPQVAVEDK</sequence>
<protein>
    <recommendedName>
        <fullName evidence="1">NAD(P)H-quinone oxidoreductase subunit M</fullName>
        <ecNumber evidence="1">7.1.1.-</ecNumber>
    </recommendedName>
    <alternativeName>
        <fullName evidence="1">NAD(P)H dehydrogenase I subunit M</fullName>
        <shortName evidence="1">NDH-1 subunit M</shortName>
        <shortName evidence="1">NDH-M</shortName>
    </alternativeName>
</protein>
<dbReference type="EC" id="7.1.1.-" evidence="1"/>
<dbReference type="EMBL" id="BA000019">
    <property type="protein sequence ID" value="BAB73431.1"/>
    <property type="molecule type" value="Genomic_DNA"/>
</dbReference>
<dbReference type="PIR" id="AF2022">
    <property type="entry name" value="AF2022"/>
</dbReference>
<dbReference type="RefSeq" id="WP_010995900.1">
    <property type="nucleotide sequence ID" value="NZ_RSCN01000019.1"/>
</dbReference>
<dbReference type="SMR" id="Q8YW84"/>
<dbReference type="STRING" id="103690.gene:10493750"/>
<dbReference type="KEGG" id="ana:all1732"/>
<dbReference type="eggNOG" id="ENOG5031AQM">
    <property type="taxonomic scope" value="Bacteria"/>
</dbReference>
<dbReference type="OrthoDB" id="461686at2"/>
<dbReference type="Proteomes" id="UP000002483">
    <property type="component" value="Chromosome"/>
</dbReference>
<dbReference type="GO" id="GO:0031676">
    <property type="term" value="C:plasma membrane-derived thylakoid membrane"/>
    <property type="evidence" value="ECO:0007669"/>
    <property type="project" value="UniProtKB-SubCell"/>
</dbReference>
<dbReference type="GO" id="GO:0016655">
    <property type="term" value="F:oxidoreductase activity, acting on NAD(P)H, quinone or similar compound as acceptor"/>
    <property type="evidence" value="ECO:0007669"/>
    <property type="project" value="UniProtKB-UniRule"/>
</dbReference>
<dbReference type="GO" id="GO:0048038">
    <property type="term" value="F:quinone binding"/>
    <property type="evidence" value="ECO:0007669"/>
    <property type="project" value="UniProtKB-KW"/>
</dbReference>
<dbReference type="HAMAP" id="MF_01352">
    <property type="entry name" value="NDH1_NDH1M"/>
    <property type="match status" value="1"/>
</dbReference>
<dbReference type="InterPro" id="IPR018922">
    <property type="entry name" value="NdhM"/>
</dbReference>
<dbReference type="PANTHER" id="PTHR36900">
    <property type="entry name" value="NAD(P)H-QUINONE OXIDOREDUCTASE SUBUNIT M, CHLOROPLASTIC"/>
    <property type="match status" value="1"/>
</dbReference>
<dbReference type="PANTHER" id="PTHR36900:SF1">
    <property type="entry name" value="NAD(P)H-QUINONE OXIDOREDUCTASE SUBUNIT M, CHLOROPLASTIC"/>
    <property type="match status" value="1"/>
</dbReference>
<dbReference type="Pfam" id="PF10664">
    <property type="entry name" value="NdhM"/>
    <property type="match status" value="1"/>
</dbReference>
<keyword id="KW-0472">Membrane</keyword>
<keyword id="KW-0520">NAD</keyword>
<keyword id="KW-0521">NADP</keyword>
<keyword id="KW-0618">Plastoquinone</keyword>
<keyword id="KW-0874">Quinone</keyword>
<keyword id="KW-1185">Reference proteome</keyword>
<keyword id="KW-0793">Thylakoid</keyword>
<keyword id="KW-1278">Translocase</keyword>
<keyword id="KW-0813">Transport</keyword>
<feature type="chain" id="PRO_0000352179" description="NAD(P)H-quinone oxidoreductase subunit M">
    <location>
        <begin position="1"/>
        <end position="118"/>
    </location>
</feature>
<evidence type="ECO:0000255" key="1">
    <source>
        <dbReference type="HAMAP-Rule" id="MF_01352"/>
    </source>
</evidence>
<reference key="1">
    <citation type="journal article" date="2001" name="DNA Res.">
        <title>Complete genomic sequence of the filamentous nitrogen-fixing cyanobacterium Anabaena sp. strain PCC 7120.</title>
        <authorList>
            <person name="Kaneko T."/>
            <person name="Nakamura Y."/>
            <person name="Wolk C.P."/>
            <person name="Kuritz T."/>
            <person name="Sasamoto S."/>
            <person name="Watanabe A."/>
            <person name="Iriguchi M."/>
            <person name="Ishikawa A."/>
            <person name="Kawashima K."/>
            <person name="Kimura T."/>
            <person name="Kishida Y."/>
            <person name="Kohara M."/>
            <person name="Matsumoto M."/>
            <person name="Matsuno A."/>
            <person name="Muraki A."/>
            <person name="Nakazaki N."/>
            <person name="Shimpo S."/>
            <person name="Sugimoto M."/>
            <person name="Takazawa M."/>
            <person name="Yamada M."/>
            <person name="Yasuda M."/>
            <person name="Tabata S."/>
        </authorList>
    </citation>
    <scope>NUCLEOTIDE SEQUENCE [LARGE SCALE GENOMIC DNA]</scope>
    <source>
        <strain>PCC 7120 / SAG 25.82 / UTEX 2576</strain>
    </source>
</reference>
<proteinExistence type="inferred from homology"/>
<gene>
    <name evidence="1" type="primary">ndhM</name>
    <name type="ordered locus">all1732</name>
</gene>